<keyword id="KW-0648">Protein biosynthesis</keyword>
<keyword id="KW-1185">Reference proteome</keyword>
<keyword id="KW-0808">Transferase</keyword>
<proteinExistence type="inferred from homology"/>
<reference key="1">
    <citation type="journal article" date="2008" name="Genome Res.">
        <title>The genome of Pelotomaculum thermopropionicum reveals niche-associated evolution in anaerobic microbiota.</title>
        <authorList>
            <person name="Kosaka T."/>
            <person name="Kato S."/>
            <person name="Shimoyama T."/>
            <person name="Ishii S."/>
            <person name="Abe T."/>
            <person name="Watanabe K."/>
        </authorList>
    </citation>
    <scope>NUCLEOTIDE SEQUENCE [LARGE SCALE GENOMIC DNA]</scope>
    <source>
        <strain>DSM 13744 / JCM 10971 / SI</strain>
    </source>
</reference>
<sequence>MRVVFMGTPDFAVPSLKALVEAGHDVLAVVTQPDRPRGRGRKETPPPVKQAAHALNIPVFQPLKIKDADFTALLKKLSPQVIAVVAYGRIIPPDILTIPKYGCINVHASLLPKYRGAAPIHWAVINGEKETGITTMFMDEGLDTGDMILQEAVAITEEDTAGTVHDALAVLGARLLVQTLELVGQGMAPRVPQQGIPSYAPPLKTEDELIRWDRTARDIFNQIRGMNPWPGARTYFSGKVLKIWRAAVVEEEGAALKPGQVMSAGRNAIVVGTGRGRIAVTELQLQGARRLSAGDFLRGTPMPEGIVLGEACS</sequence>
<protein>
    <recommendedName>
        <fullName evidence="1">Methionyl-tRNA formyltransferase</fullName>
        <ecNumber evidence="1">2.1.2.9</ecNumber>
    </recommendedName>
</protein>
<gene>
    <name evidence="1" type="primary">fmt</name>
    <name type="ordered locus">PTH_1790</name>
</gene>
<comment type="function">
    <text evidence="1">Attaches a formyl group to the free amino group of methionyl-tRNA(fMet). The formyl group appears to play a dual role in the initiator identity of N-formylmethionyl-tRNA by promoting its recognition by IF2 and preventing the misappropriation of this tRNA by the elongation apparatus.</text>
</comment>
<comment type="catalytic activity">
    <reaction evidence="1">
        <text>L-methionyl-tRNA(fMet) + (6R)-10-formyltetrahydrofolate = N-formyl-L-methionyl-tRNA(fMet) + (6S)-5,6,7,8-tetrahydrofolate + H(+)</text>
        <dbReference type="Rhea" id="RHEA:24380"/>
        <dbReference type="Rhea" id="RHEA-COMP:9952"/>
        <dbReference type="Rhea" id="RHEA-COMP:9953"/>
        <dbReference type="ChEBI" id="CHEBI:15378"/>
        <dbReference type="ChEBI" id="CHEBI:57453"/>
        <dbReference type="ChEBI" id="CHEBI:78530"/>
        <dbReference type="ChEBI" id="CHEBI:78844"/>
        <dbReference type="ChEBI" id="CHEBI:195366"/>
        <dbReference type="EC" id="2.1.2.9"/>
    </reaction>
</comment>
<comment type="similarity">
    <text evidence="1">Belongs to the Fmt family.</text>
</comment>
<dbReference type="EC" id="2.1.2.9" evidence="1"/>
<dbReference type="EMBL" id="AP009389">
    <property type="protein sequence ID" value="BAF59971.1"/>
    <property type="molecule type" value="Genomic_DNA"/>
</dbReference>
<dbReference type="SMR" id="A5D1B9"/>
<dbReference type="STRING" id="370438.PTH_1790"/>
<dbReference type="KEGG" id="pth:PTH_1790"/>
<dbReference type="eggNOG" id="COG0223">
    <property type="taxonomic scope" value="Bacteria"/>
</dbReference>
<dbReference type="HOGENOM" id="CLU_033347_1_1_9"/>
<dbReference type="Proteomes" id="UP000006556">
    <property type="component" value="Chromosome"/>
</dbReference>
<dbReference type="GO" id="GO:0005829">
    <property type="term" value="C:cytosol"/>
    <property type="evidence" value="ECO:0007669"/>
    <property type="project" value="TreeGrafter"/>
</dbReference>
<dbReference type="GO" id="GO:0004479">
    <property type="term" value="F:methionyl-tRNA formyltransferase activity"/>
    <property type="evidence" value="ECO:0007669"/>
    <property type="project" value="UniProtKB-UniRule"/>
</dbReference>
<dbReference type="CDD" id="cd08646">
    <property type="entry name" value="FMT_core_Met-tRNA-FMT_N"/>
    <property type="match status" value="1"/>
</dbReference>
<dbReference type="CDD" id="cd08704">
    <property type="entry name" value="Met_tRNA_FMT_C"/>
    <property type="match status" value="1"/>
</dbReference>
<dbReference type="FunFam" id="3.40.50.12230:FF:000001">
    <property type="entry name" value="Methionyl-tRNA formyltransferase"/>
    <property type="match status" value="1"/>
</dbReference>
<dbReference type="Gene3D" id="3.40.50.12230">
    <property type="match status" value="1"/>
</dbReference>
<dbReference type="HAMAP" id="MF_00182">
    <property type="entry name" value="Formyl_trans"/>
    <property type="match status" value="1"/>
</dbReference>
<dbReference type="InterPro" id="IPR005794">
    <property type="entry name" value="Fmt"/>
</dbReference>
<dbReference type="InterPro" id="IPR005793">
    <property type="entry name" value="Formyl_trans_C"/>
</dbReference>
<dbReference type="InterPro" id="IPR002376">
    <property type="entry name" value="Formyl_transf_N"/>
</dbReference>
<dbReference type="InterPro" id="IPR036477">
    <property type="entry name" value="Formyl_transf_N_sf"/>
</dbReference>
<dbReference type="InterPro" id="IPR011034">
    <property type="entry name" value="Formyl_transferase-like_C_sf"/>
</dbReference>
<dbReference type="InterPro" id="IPR001555">
    <property type="entry name" value="GART_AS"/>
</dbReference>
<dbReference type="InterPro" id="IPR044135">
    <property type="entry name" value="Met-tRNA-FMT_C"/>
</dbReference>
<dbReference type="InterPro" id="IPR041711">
    <property type="entry name" value="Met-tRNA-FMT_N"/>
</dbReference>
<dbReference type="NCBIfam" id="TIGR00460">
    <property type="entry name" value="fmt"/>
    <property type="match status" value="1"/>
</dbReference>
<dbReference type="PANTHER" id="PTHR11138">
    <property type="entry name" value="METHIONYL-TRNA FORMYLTRANSFERASE"/>
    <property type="match status" value="1"/>
</dbReference>
<dbReference type="PANTHER" id="PTHR11138:SF5">
    <property type="entry name" value="METHIONYL-TRNA FORMYLTRANSFERASE, MITOCHONDRIAL"/>
    <property type="match status" value="1"/>
</dbReference>
<dbReference type="Pfam" id="PF02911">
    <property type="entry name" value="Formyl_trans_C"/>
    <property type="match status" value="1"/>
</dbReference>
<dbReference type="Pfam" id="PF00551">
    <property type="entry name" value="Formyl_trans_N"/>
    <property type="match status" value="1"/>
</dbReference>
<dbReference type="SUPFAM" id="SSF50486">
    <property type="entry name" value="FMT C-terminal domain-like"/>
    <property type="match status" value="1"/>
</dbReference>
<dbReference type="SUPFAM" id="SSF53328">
    <property type="entry name" value="Formyltransferase"/>
    <property type="match status" value="1"/>
</dbReference>
<dbReference type="PROSITE" id="PS00373">
    <property type="entry name" value="GART"/>
    <property type="match status" value="1"/>
</dbReference>
<feature type="chain" id="PRO_1000077309" description="Methionyl-tRNA formyltransferase">
    <location>
        <begin position="1"/>
        <end position="313"/>
    </location>
</feature>
<feature type="binding site" evidence="1">
    <location>
        <begin position="109"/>
        <end position="112"/>
    </location>
    <ligand>
        <name>(6S)-5,6,7,8-tetrahydrofolate</name>
        <dbReference type="ChEBI" id="CHEBI:57453"/>
    </ligand>
</feature>
<organism>
    <name type="scientific">Pelotomaculum thermopropionicum (strain DSM 13744 / JCM 10971 / SI)</name>
    <dbReference type="NCBI Taxonomy" id="370438"/>
    <lineage>
        <taxon>Bacteria</taxon>
        <taxon>Bacillati</taxon>
        <taxon>Bacillota</taxon>
        <taxon>Clostridia</taxon>
        <taxon>Eubacteriales</taxon>
        <taxon>Desulfotomaculaceae</taxon>
        <taxon>Pelotomaculum</taxon>
    </lineage>
</organism>
<accession>A5D1B9</accession>
<name>FMT_PELTS</name>
<evidence type="ECO:0000255" key="1">
    <source>
        <dbReference type="HAMAP-Rule" id="MF_00182"/>
    </source>
</evidence>